<name>NIKR_METBU</name>
<dbReference type="EMBL" id="CP000300">
    <property type="protein sequence ID" value="ABE52917.1"/>
    <property type="molecule type" value="Genomic_DNA"/>
</dbReference>
<dbReference type="RefSeq" id="WP_011500057.1">
    <property type="nucleotide sequence ID" value="NC_007955.1"/>
</dbReference>
<dbReference type="SMR" id="Q12UF9"/>
<dbReference type="STRING" id="259564.Mbur_2041"/>
<dbReference type="GeneID" id="3997423"/>
<dbReference type="KEGG" id="mbu:Mbur_2041"/>
<dbReference type="HOGENOM" id="CLU_113319_1_2_2"/>
<dbReference type="OrthoDB" id="25654at2157"/>
<dbReference type="Proteomes" id="UP000001979">
    <property type="component" value="Chromosome"/>
</dbReference>
<dbReference type="GO" id="GO:0003677">
    <property type="term" value="F:DNA binding"/>
    <property type="evidence" value="ECO:0007669"/>
    <property type="project" value="UniProtKB-KW"/>
</dbReference>
<dbReference type="GO" id="GO:0003700">
    <property type="term" value="F:DNA-binding transcription factor activity"/>
    <property type="evidence" value="ECO:0007669"/>
    <property type="project" value="UniProtKB-UniRule"/>
</dbReference>
<dbReference type="GO" id="GO:0016151">
    <property type="term" value="F:nickel cation binding"/>
    <property type="evidence" value="ECO:0007669"/>
    <property type="project" value="UniProtKB-UniRule"/>
</dbReference>
<dbReference type="GO" id="GO:0010045">
    <property type="term" value="P:response to nickel cation"/>
    <property type="evidence" value="ECO:0007669"/>
    <property type="project" value="InterPro"/>
</dbReference>
<dbReference type="CDD" id="cd22231">
    <property type="entry name" value="RHH_NikR_HicB-like"/>
    <property type="match status" value="1"/>
</dbReference>
<dbReference type="Gene3D" id="3.30.70.1150">
    <property type="entry name" value="ACT-like. Chain A, domain 2"/>
    <property type="match status" value="1"/>
</dbReference>
<dbReference type="Gene3D" id="1.10.1220.10">
    <property type="entry name" value="Met repressor-like"/>
    <property type="match status" value="1"/>
</dbReference>
<dbReference type="HAMAP" id="MF_00476">
    <property type="entry name" value="NikR"/>
    <property type="match status" value="1"/>
</dbReference>
<dbReference type="InterPro" id="IPR027271">
    <property type="entry name" value="Acetolactate_synth/TF_NikR_C"/>
</dbReference>
<dbReference type="InterPro" id="IPR045865">
    <property type="entry name" value="ACT-like_dom_sf"/>
</dbReference>
<dbReference type="InterPro" id="IPR013321">
    <property type="entry name" value="Arc_rbn_hlx_hlx"/>
</dbReference>
<dbReference type="InterPro" id="IPR002145">
    <property type="entry name" value="CopG"/>
</dbReference>
<dbReference type="InterPro" id="IPR050192">
    <property type="entry name" value="CopG/NikR_regulator"/>
</dbReference>
<dbReference type="InterPro" id="IPR022988">
    <property type="entry name" value="Ni_resp_reg_NikR"/>
</dbReference>
<dbReference type="InterPro" id="IPR010985">
    <property type="entry name" value="Ribbon_hlx_hlx"/>
</dbReference>
<dbReference type="InterPro" id="IPR014864">
    <property type="entry name" value="TF_NikR_Ni-bd_C"/>
</dbReference>
<dbReference type="NCBIfam" id="NF001884">
    <property type="entry name" value="PRK00630.1"/>
    <property type="match status" value="1"/>
</dbReference>
<dbReference type="NCBIfam" id="NF002169">
    <property type="entry name" value="PRK01002.1"/>
    <property type="match status" value="1"/>
</dbReference>
<dbReference type="NCBIfam" id="NF002815">
    <property type="entry name" value="PRK02967.1"/>
    <property type="match status" value="1"/>
</dbReference>
<dbReference type="NCBIfam" id="NF003381">
    <property type="entry name" value="PRK04460.1"/>
    <property type="match status" value="1"/>
</dbReference>
<dbReference type="PANTHER" id="PTHR34719">
    <property type="entry name" value="NICKEL-RESPONSIVE REGULATOR"/>
    <property type="match status" value="1"/>
</dbReference>
<dbReference type="PANTHER" id="PTHR34719:SF2">
    <property type="entry name" value="NICKEL-RESPONSIVE REGULATOR"/>
    <property type="match status" value="1"/>
</dbReference>
<dbReference type="Pfam" id="PF08753">
    <property type="entry name" value="NikR_C"/>
    <property type="match status" value="1"/>
</dbReference>
<dbReference type="Pfam" id="PF01402">
    <property type="entry name" value="RHH_1"/>
    <property type="match status" value="1"/>
</dbReference>
<dbReference type="SUPFAM" id="SSF55021">
    <property type="entry name" value="ACT-like"/>
    <property type="match status" value="1"/>
</dbReference>
<dbReference type="SUPFAM" id="SSF47598">
    <property type="entry name" value="Ribbon-helix-helix"/>
    <property type="match status" value="1"/>
</dbReference>
<comment type="function">
    <text evidence="1">Transcriptional regulator.</text>
</comment>
<comment type="cofactor">
    <cofactor evidence="1">
        <name>Ni(2+)</name>
        <dbReference type="ChEBI" id="CHEBI:49786"/>
    </cofactor>
    <text evidence="1">Binds 1 nickel ion per subunit.</text>
</comment>
<comment type="similarity">
    <text evidence="1">Belongs to the transcriptional regulatory CopG/NikR family.</text>
</comment>
<organism>
    <name type="scientific">Methanococcoides burtonii (strain DSM 6242 / NBRC 107633 / OCM 468 / ACE-M)</name>
    <dbReference type="NCBI Taxonomy" id="259564"/>
    <lineage>
        <taxon>Archaea</taxon>
        <taxon>Methanobacteriati</taxon>
        <taxon>Methanobacteriota</taxon>
        <taxon>Stenosarchaea group</taxon>
        <taxon>Methanomicrobia</taxon>
        <taxon>Methanosarcinales</taxon>
        <taxon>Methanosarcinaceae</taxon>
        <taxon>Methanococcoides</taxon>
    </lineage>
</organism>
<sequence length="140" mass="16036">MEQELMRIGVSLPDNLLNKFDSIIEGRGYSSRSEGIRDSIRTYINQYEWMSDIRGRRVGTITIIYDHTKRGLSNAVADIQHDYSDLIKSSVHIHLDHDNCLEVIIFDGEGELIKEMDERLMALKGVKYVKLNTAPPAEKI</sequence>
<accession>Q12UF9</accession>
<protein>
    <recommendedName>
        <fullName evidence="1">Putative nickel-responsive regulator</fullName>
    </recommendedName>
</protein>
<feature type="chain" id="PRO_1000014072" description="Putative nickel-responsive regulator">
    <location>
        <begin position="1"/>
        <end position="140"/>
    </location>
</feature>
<feature type="binding site" evidence="1">
    <location>
        <position position="81"/>
    </location>
    <ligand>
        <name>Ni(2+)</name>
        <dbReference type="ChEBI" id="CHEBI:49786"/>
    </ligand>
</feature>
<feature type="binding site" evidence="1">
    <location>
        <position position="92"/>
    </location>
    <ligand>
        <name>Ni(2+)</name>
        <dbReference type="ChEBI" id="CHEBI:49786"/>
    </ligand>
</feature>
<feature type="binding site" evidence="1">
    <location>
        <position position="94"/>
    </location>
    <ligand>
        <name>Ni(2+)</name>
        <dbReference type="ChEBI" id="CHEBI:49786"/>
    </ligand>
</feature>
<feature type="binding site" evidence="1">
    <location>
        <position position="100"/>
    </location>
    <ligand>
        <name>Ni(2+)</name>
        <dbReference type="ChEBI" id="CHEBI:49786"/>
    </ligand>
</feature>
<proteinExistence type="inferred from homology"/>
<evidence type="ECO:0000255" key="1">
    <source>
        <dbReference type="HAMAP-Rule" id="MF_00476"/>
    </source>
</evidence>
<reference key="1">
    <citation type="journal article" date="2009" name="ISME J.">
        <title>The genome sequence of the psychrophilic archaeon, Methanococcoides burtonii: the role of genome evolution in cold adaptation.</title>
        <authorList>
            <person name="Allen M.A."/>
            <person name="Lauro F.M."/>
            <person name="Williams T.J."/>
            <person name="Burg D."/>
            <person name="Siddiqui K.S."/>
            <person name="De Francisci D."/>
            <person name="Chong K.W."/>
            <person name="Pilak O."/>
            <person name="Chew H.H."/>
            <person name="De Maere M.Z."/>
            <person name="Ting L."/>
            <person name="Katrib M."/>
            <person name="Ng C."/>
            <person name="Sowers K.R."/>
            <person name="Galperin M.Y."/>
            <person name="Anderson I.J."/>
            <person name="Ivanova N."/>
            <person name="Dalin E."/>
            <person name="Martinez M."/>
            <person name="Lapidus A."/>
            <person name="Hauser L."/>
            <person name="Land M."/>
            <person name="Thomas T."/>
            <person name="Cavicchioli R."/>
        </authorList>
    </citation>
    <scope>NUCLEOTIDE SEQUENCE [LARGE SCALE GENOMIC DNA]</scope>
    <source>
        <strain>DSM 6242 / NBRC 107633 / OCM 468 / ACE-M</strain>
    </source>
</reference>
<keyword id="KW-0238">DNA-binding</keyword>
<keyword id="KW-0479">Metal-binding</keyword>
<keyword id="KW-0533">Nickel</keyword>
<keyword id="KW-0804">Transcription</keyword>
<keyword id="KW-0805">Transcription regulation</keyword>
<gene>
    <name type="ordered locus">Mbur_2041</name>
</gene>